<feature type="chain" id="PRO_1000130073" description="Chaperonin GroEL">
    <location>
        <begin position="1"/>
        <end position="540"/>
    </location>
</feature>
<feature type="binding site" evidence="1">
    <location>
        <begin position="30"/>
        <end position="33"/>
    </location>
    <ligand>
        <name>ATP</name>
        <dbReference type="ChEBI" id="CHEBI:30616"/>
    </ligand>
</feature>
<feature type="binding site" evidence="1">
    <location>
        <position position="51"/>
    </location>
    <ligand>
        <name>ATP</name>
        <dbReference type="ChEBI" id="CHEBI:30616"/>
    </ligand>
</feature>
<feature type="binding site" evidence="1">
    <location>
        <begin position="87"/>
        <end position="91"/>
    </location>
    <ligand>
        <name>ATP</name>
        <dbReference type="ChEBI" id="CHEBI:30616"/>
    </ligand>
</feature>
<feature type="binding site" evidence="1">
    <location>
        <position position="415"/>
    </location>
    <ligand>
        <name>ATP</name>
        <dbReference type="ChEBI" id="CHEBI:30616"/>
    </ligand>
</feature>
<feature type="binding site" evidence="1">
    <location>
        <position position="496"/>
    </location>
    <ligand>
        <name>ATP</name>
        <dbReference type="ChEBI" id="CHEBI:30616"/>
    </ligand>
</feature>
<name>CH60_THEYD</name>
<protein>
    <recommendedName>
        <fullName evidence="1">Chaperonin GroEL</fullName>
        <ecNumber evidence="1">5.6.1.7</ecNumber>
    </recommendedName>
    <alternativeName>
        <fullName evidence="1">60 kDa chaperonin</fullName>
    </alternativeName>
    <alternativeName>
        <fullName evidence="1">Chaperonin-60</fullName>
        <shortName evidence="1">Cpn60</shortName>
    </alternativeName>
</protein>
<evidence type="ECO:0000255" key="1">
    <source>
        <dbReference type="HAMAP-Rule" id="MF_00600"/>
    </source>
</evidence>
<accession>B5YJN3</accession>
<comment type="function">
    <text evidence="1">Together with its co-chaperonin GroES, plays an essential role in assisting protein folding. The GroEL-GroES system forms a nano-cage that allows encapsulation of the non-native substrate proteins and provides a physical environment optimized to promote and accelerate protein folding.</text>
</comment>
<comment type="catalytic activity">
    <reaction evidence="1">
        <text>ATP + H2O + a folded polypeptide = ADP + phosphate + an unfolded polypeptide.</text>
        <dbReference type="EC" id="5.6.1.7"/>
    </reaction>
</comment>
<comment type="subunit">
    <text evidence="1">Forms a cylinder of 14 subunits composed of two heptameric rings stacked back-to-back. Interacts with the co-chaperonin GroES.</text>
</comment>
<comment type="subcellular location">
    <subcellularLocation>
        <location evidence="1">Cytoplasm</location>
    </subcellularLocation>
</comment>
<comment type="similarity">
    <text evidence="1">Belongs to the chaperonin (HSP60) family.</text>
</comment>
<proteinExistence type="inferred from homology"/>
<reference key="1">
    <citation type="submission" date="2008-08" db="EMBL/GenBank/DDBJ databases">
        <title>The complete genome sequence of Thermodesulfovibrio yellowstonii strain ATCC 51303 / DSM 11347 / YP87.</title>
        <authorList>
            <person name="Dodson R.J."/>
            <person name="Durkin A.S."/>
            <person name="Wu M."/>
            <person name="Eisen J."/>
            <person name="Sutton G."/>
        </authorList>
    </citation>
    <scope>NUCLEOTIDE SEQUENCE [LARGE SCALE GENOMIC DNA]</scope>
    <source>
        <strain>ATCC 51303 / DSM 11347 / YP87</strain>
    </source>
</reference>
<sequence length="540" mass="58406">MAAKQLIFGDAARQSILKGVTLLTDAVKATLGPRGRNVVIERKFGSPNVTKDGVTVAKEIDLKEPFENMGAQLVREVASKTSDVAGDGTTTATVLAYAIYKEGLKYVSAGANSMDLKRGIDKAVEAVVEELKKISKPVVDKKEIAQVGTISANNDVSIGELIAEAMDKVGKDGVITVEEAKGMATTLDIVEGMQFDRGYISPYFITDPERLECILEDAFVLIHDKKISTMKDLLPILEQIARMGRPLLIIAEDVEGEALATLVVNKLRGVLQVCAVKAPGFGERRKAMLEDIAILTGGTVISEDIGLKLENVKVEDLGKAKKIIIDKDNTTIVEGAGDPQKIQARIKQIKVQIDETTSDYDREKLQERLAKLAGGVARINVGAATEAEMKEKKARVEDALNATRAAVEEGIVPGGGVALLRCQKALEKIKFENHDQQLGAEIVKKALEEPIKQIIANAGVEATLIVEKVKENKNINYGYDAYAEKFVDMMEAGIIDPTKVTRTALQNAASVAGLMLTTEVLVAEIPEEEKKPPMPSPDMY</sequence>
<keyword id="KW-0067">ATP-binding</keyword>
<keyword id="KW-0143">Chaperone</keyword>
<keyword id="KW-0963">Cytoplasm</keyword>
<keyword id="KW-0413">Isomerase</keyword>
<keyword id="KW-0547">Nucleotide-binding</keyword>
<keyword id="KW-1185">Reference proteome</keyword>
<gene>
    <name evidence="1" type="primary">groEL</name>
    <name evidence="1" type="synonym">groL</name>
    <name type="ordered locus">THEYE_A0605</name>
</gene>
<dbReference type="EC" id="5.6.1.7" evidence="1"/>
<dbReference type="EMBL" id="CP001147">
    <property type="protein sequence ID" value="ACI20456.1"/>
    <property type="molecule type" value="Genomic_DNA"/>
</dbReference>
<dbReference type="RefSeq" id="WP_012545192.1">
    <property type="nucleotide sequence ID" value="NC_011296.1"/>
</dbReference>
<dbReference type="RefSeq" id="YP_002248448.1">
    <property type="nucleotide sequence ID" value="NC_011296.1"/>
</dbReference>
<dbReference type="SMR" id="B5YJN3"/>
<dbReference type="FunCoup" id="B5YJN3">
    <property type="interactions" value="569"/>
</dbReference>
<dbReference type="STRING" id="289376.THEYE_A0605"/>
<dbReference type="EnsemblBacteria" id="ACI20456">
    <property type="protein sequence ID" value="ACI20456"/>
    <property type="gene ID" value="THEYE_A0605"/>
</dbReference>
<dbReference type="KEGG" id="tye:THEYE_A0605"/>
<dbReference type="PATRIC" id="fig|289376.4.peg.599"/>
<dbReference type="eggNOG" id="COG0459">
    <property type="taxonomic scope" value="Bacteria"/>
</dbReference>
<dbReference type="HOGENOM" id="CLU_016503_3_0_0"/>
<dbReference type="InParanoid" id="B5YJN3"/>
<dbReference type="OrthoDB" id="9766614at2"/>
<dbReference type="Proteomes" id="UP000000718">
    <property type="component" value="Chromosome"/>
</dbReference>
<dbReference type="GO" id="GO:1990220">
    <property type="term" value="C:GroEL-GroES complex"/>
    <property type="evidence" value="ECO:0000318"/>
    <property type="project" value="GO_Central"/>
</dbReference>
<dbReference type="GO" id="GO:0005524">
    <property type="term" value="F:ATP binding"/>
    <property type="evidence" value="ECO:0000318"/>
    <property type="project" value="GO_Central"/>
</dbReference>
<dbReference type="GO" id="GO:0140662">
    <property type="term" value="F:ATP-dependent protein folding chaperone"/>
    <property type="evidence" value="ECO:0007669"/>
    <property type="project" value="InterPro"/>
</dbReference>
<dbReference type="GO" id="GO:0016853">
    <property type="term" value="F:isomerase activity"/>
    <property type="evidence" value="ECO:0007669"/>
    <property type="project" value="UniProtKB-KW"/>
</dbReference>
<dbReference type="GO" id="GO:0051082">
    <property type="term" value="F:unfolded protein binding"/>
    <property type="evidence" value="ECO:0000318"/>
    <property type="project" value="GO_Central"/>
</dbReference>
<dbReference type="GO" id="GO:0051085">
    <property type="term" value="P:chaperone cofactor-dependent protein refolding"/>
    <property type="evidence" value="ECO:0000318"/>
    <property type="project" value="GO_Central"/>
</dbReference>
<dbReference type="GO" id="GO:0042026">
    <property type="term" value="P:protein refolding"/>
    <property type="evidence" value="ECO:0007669"/>
    <property type="project" value="UniProtKB-UniRule"/>
</dbReference>
<dbReference type="GO" id="GO:0009408">
    <property type="term" value="P:response to heat"/>
    <property type="evidence" value="ECO:0000318"/>
    <property type="project" value="GO_Central"/>
</dbReference>
<dbReference type="CDD" id="cd03344">
    <property type="entry name" value="GroEL"/>
    <property type="match status" value="1"/>
</dbReference>
<dbReference type="FunFam" id="3.50.7.10:FF:000001">
    <property type="entry name" value="60 kDa chaperonin"/>
    <property type="match status" value="1"/>
</dbReference>
<dbReference type="Gene3D" id="3.50.7.10">
    <property type="entry name" value="GroEL"/>
    <property type="match status" value="1"/>
</dbReference>
<dbReference type="Gene3D" id="1.10.560.10">
    <property type="entry name" value="GroEL-like equatorial domain"/>
    <property type="match status" value="1"/>
</dbReference>
<dbReference type="Gene3D" id="3.30.260.10">
    <property type="entry name" value="TCP-1-like chaperonin intermediate domain"/>
    <property type="match status" value="1"/>
</dbReference>
<dbReference type="HAMAP" id="MF_00600">
    <property type="entry name" value="CH60"/>
    <property type="match status" value="1"/>
</dbReference>
<dbReference type="InterPro" id="IPR018370">
    <property type="entry name" value="Chaperonin_Cpn60_CS"/>
</dbReference>
<dbReference type="InterPro" id="IPR001844">
    <property type="entry name" value="Cpn60/GroEL"/>
</dbReference>
<dbReference type="InterPro" id="IPR002423">
    <property type="entry name" value="Cpn60/GroEL/TCP-1"/>
</dbReference>
<dbReference type="InterPro" id="IPR027409">
    <property type="entry name" value="GroEL-like_apical_dom_sf"/>
</dbReference>
<dbReference type="InterPro" id="IPR027413">
    <property type="entry name" value="GROEL-like_equatorial_sf"/>
</dbReference>
<dbReference type="InterPro" id="IPR027410">
    <property type="entry name" value="TCP-1-like_intermed_sf"/>
</dbReference>
<dbReference type="NCBIfam" id="TIGR02348">
    <property type="entry name" value="GroEL"/>
    <property type="match status" value="1"/>
</dbReference>
<dbReference type="NCBIfam" id="NF000592">
    <property type="entry name" value="PRK00013.1"/>
    <property type="match status" value="1"/>
</dbReference>
<dbReference type="NCBIfam" id="NF009487">
    <property type="entry name" value="PRK12849.1"/>
    <property type="match status" value="1"/>
</dbReference>
<dbReference type="NCBIfam" id="NF009488">
    <property type="entry name" value="PRK12850.1"/>
    <property type="match status" value="1"/>
</dbReference>
<dbReference type="NCBIfam" id="NF009489">
    <property type="entry name" value="PRK12851.1"/>
    <property type="match status" value="1"/>
</dbReference>
<dbReference type="PANTHER" id="PTHR45633">
    <property type="entry name" value="60 KDA HEAT SHOCK PROTEIN, MITOCHONDRIAL"/>
    <property type="match status" value="1"/>
</dbReference>
<dbReference type="Pfam" id="PF00118">
    <property type="entry name" value="Cpn60_TCP1"/>
    <property type="match status" value="1"/>
</dbReference>
<dbReference type="PRINTS" id="PR00298">
    <property type="entry name" value="CHAPERONIN60"/>
</dbReference>
<dbReference type="SUPFAM" id="SSF52029">
    <property type="entry name" value="GroEL apical domain-like"/>
    <property type="match status" value="1"/>
</dbReference>
<dbReference type="SUPFAM" id="SSF48592">
    <property type="entry name" value="GroEL equatorial domain-like"/>
    <property type="match status" value="1"/>
</dbReference>
<dbReference type="SUPFAM" id="SSF54849">
    <property type="entry name" value="GroEL-intermediate domain like"/>
    <property type="match status" value="1"/>
</dbReference>
<dbReference type="PROSITE" id="PS00296">
    <property type="entry name" value="CHAPERONINS_CPN60"/>
    <property type="match status" value="1"/>
</dbReference>
<organism>
    <name type="scientific">Thermodesulfovibrio yellowstonii (strain ATCC 51303 / DSM 11347 / YP87)</name>
    <dbReference type="NCBI Taxonomy" id="289376"/>
    <lineage>
        <taxon>Bacteria</taxon>
        <taxon>Pseudomonadati</taxon>
        <taxon>Nitrospirota</taxon>
        <taxon>Thermodesulfovibrionia</taxon>
        <taxon>Thermodesulfovibrionales</taxon>
        <taxon>Thermodesulfovibrionaceae</taxon>
        <taxon>Thermodesulfovibrio</taxon>
    </lineage>
</organism>